<gene>
    <name evidence="1" type="primary">rplA</name>
    <name type="ordered locus">HCH_06227</name>
</gene>
<evidence type="ECO:0000255" key="1">
    <source>
        <dbReference type="HAMAP-Rule" id="MF_01318"/>
    </source>
</evidence>
<evidence type="ECO:0000305" key="2"/>
<dbReference type="EMBL" id="CP000155">
    <property type="protein sequence ID" value="ABC32872.1"/>
    <property type="molecule type" value="Genomic_DNA"/>
</dbReference>
<dbReference type="RefSeq" id="WP_011399930.1">
    <property type="nucleotide sequence ID" value="NC_007645.1"/>
</dbReference>
<dbReference type="SMR" id="Q2S902"/>
<dbReference type="STRING" id="349521.HCH_06227"/>
<dbReference type="KEGG" id="hch:HCH_06227"/>
<dbReference type="eggNOG" id="COG0081">
    <property type="taxonomic scope" value="Bacteria"/>
</dbReference>
<dbReference type="HOGENOM" id="CLU_062853_0_0_6"/>
<dbReference type="OrthoDB" id="9803740at2"/>
<dbReference type="Proteomes" id="UP000000238">
    <property type="component" value="Chromosome"/>
</dbReference>
<dbReference type="GO" id="GO:0022625">
    <property type="term" value="C:cytosolic large ribosomal subunit"/>
    <property type="evidence" value="ECO:0007669"/>
    <property type="project" value="TreeGrafter"/>
</dbReference>
<dbReference type="GO" id="GO:0019843">
    <property type="term" value="F:rRNA binding"/>
    <property type="evidence" value="ECO:0007669"/>
    <property type="project" value="UniProtKB-UniRule"/>
</dbReference>
<dbReference type="GO" id="GO:0003735">
    <property type="term" value="F:structural constituent of ribosome"/>
    <property type="evidence" value="ECO:0007669"/>
    <property type="project" value="InterPro"/>
</dbReference>
<dbReference type="GO" id="GO:0000049">
    <property type="term" value="F:tRNA binding"/>
    <property type="evidence" value="ECO:0007669"/>
    <property type="project" value="UniProtKB-KW"/>
</dbReference>
<dbReference type="GO" id="GO:0006417">
    <property type="term" value="P:regulation of translation"/>
    <property type="evidence" value="ECO:0007669"/>
    <property type="project" value="UniProtKB-KW"/>
</dbReference>
<dbReference type="GO" id="GO:0006412">
    <property type="term" value="P:translation"/>
    <property type="evidence" value="ECO:0007669"/>
    <property type="project" value="UniProtKB-UniRule"/>
</dbReference>
<dbReference type="CDD" id="cd00403">
    <property type="entry name" value="Ribosomal_L1"/>
    <property type="match status" value="1"/>
</dbReference>
<dbReference type="FunFam" id="3.40.50.790:FF:000001">
    <property type="entry name" value="50S ribosomal protein L1"/>
    <property type="match status" value="1"/>
</dbReference>
<dbReference type="Gene3D" id="3.30.190.20">
    <property type="match status" value="1"/>
</dbReference>
<dbReference type="Gene3D" id="3.40.50.790">
    <property type="match status" value="1"/>
</dbReference>
<dbReference type="HAMAP" id="MF_01318_B">
    <property type="entry name" value="Ribosomal_uL1_B"/>
    <property type="match status" value="1"/>
</dbReference>
<dbReference type="InterPro" id="IPR005878">
    <property type="entry name" value="Ribosom_uL1_bac-type"/>
</dbReference>
<dbReference type="InterPro" id="IPR002143">
    <property type="entry name" value="Ribosomal_uL1"/>
</dbReference>
<dbReference type="InterPro" id="IPR023674">
    <property type="entry name" value="Ribosomal_uL1-like"/>
</dbReference>
<dbReference type="InterPro" id="IPR028364">
    <property type="entry name" value="Ribosomal_uL1/biogenesis"/>
</dbReference>
<dbReference type="InterPro" id="IPR016095">
    <property type="entry name" value="Ribosomal_uL1_3-a/b-sand"/>
</dbReference>
<dbReference type="InterPro" id="IPR023673">
    <property type="entry name" value="Ribosomal_uL1_CS"/>
</dbReference>
<dbReference type="NCBIfam" id="TIGR01169">
    <property type="entry name" value="rplA_bact"/>
    <property type="match status" value="1"/>
</dbReference>
<dbReference type="PANTHER" id="PTHR36427">
    <property type="entry name" value="54S RIBOSOMAL PROTEIN L1, MITOCHONDRIAL"/>
    <property type="match status" value="1"/>
</dbReference>
<dbReference type="PANTHER" id="PTHR36427:SF3">
    <property type="entry name" value="LARGE RIBOSOMAL SUBUNIT PROTEIN UL1M"/>
    <property type="match status" value="1"/>
</dbReference>
<dbReference type="Pfam" id="PF00687">
    <property type="entry name" value="Ribosomal_L1"/>
    <property type="match status" value="1"/>
</dbReference>
<dbReference type="PIRSF" id="PIRSF002155">
    <property type="entry name" value="Ribosomal_L1"/>
    <property type="match status" value="1"/>
</dbReference>
<dbReference type="SUPFAM" id="SSF56808">
    <property type="entry name" value="Ribosomal protein L1"/>
    <property type="match status" value="1"/>
</dbReference>
<dbReference type="PROSITE" id="PS01199">
    <property type="entry name" value="RIBOSOMAL_L1"/>
    <property type="match status" value="1"/>
</dbReference>
<keyword id="KW-1185">Reference proteome</keyword>
<keyword id="KW-0678">Repressor</keyword>
<keyword id="KW-0687">Ribonucleoprotein</keyword>
<keyword id="KW-0689">Ribosomal protein</keyword>
<keyword id="KW-0694">RNA-binding</keyword>
<keyword id="KW-0699">rRNA-binding</keyword>
<keyword id="KW-0810">Translation regulation</keyword>
<keyword id="KW-0820">tRNA-binding</keyword>
<sequence length="232" mass="24482">MAKLTKRQKAIREKVQAGKAYSVEEAVALLTELSAPVKFKESIDVSVNLGVDARKSDQVVRSSTVLPNGTGKTVRVAVFTQGANADKAKAAGADIVGMDDLAEEVKKGNLDFDVVIATPDAMRVVGQLGQILGPRGLMPNPKVGTVTADVEAAVNNAKAGQIRYRTDKNGIIHAPLGNVEFSAEHIKQNLEALIADLKKIKPSSAKGVYLKKVTLSSTMGPGLLIDQNSLAV</sequence>
<name>RL1_HAHCH</name>
<feature type="chain" id="PRO_0000308019" description="Large ribosomal subunit protein uL1">
    <location>
        <begin position="1"/>
        <end position="232"/>
    </location>
</feature>
<accession>Q2S902</accession>
<proteinExistence type="inferred from homology"/>
<comment type="function">
    <text evidence="1">Binds directly to 23S rRNA. The L1 stalk is quite mobile in the ribosome, and is involved in E site tRNA release.</text>
</comment>
<comment type="function">
    <text evidence="1">Protein L1 is also a translational repressor protein, it controls the translation of the L11 operon by binding to its mRNA.</text>
</comment>
<comment type="subunit">
    <text evidence="1">Part of the 50S ribosomal subunit.</text>
</comment>
<comment type="similarity">
    <text evidence="1">Belongs to the universal ribosomal protein uL1 family.</text>
</comment>
<protein>
    <recommendedName>
        <fullName evidence="1">Large ribosomal subunit protein uL1</fullName>
    </recommendedName>
    <alternativeName>
        <fullName evidence="2">50S ribosomal protein L1</fullName>
    </alternativeName>
</protein>
<reference key="1">
    <citation type="journal article" date="2005" name="Nucleic Acids Res.">
        <title>Genomic blueprint of Hahella chejuensis, a marine microbe producing an algicidal agent.</title>
        <authorList>
            <person name="Jeong H."/>
            <person name="Yim J.H."/>
            <person name="Lee C."/>
            <person name="Choi S.-H."/>
            <person name="Park Y.K."/>
            <person name="Yoon S.H."/>
            <person name="Hur C.-G."/>
            <person name="Kang H.-Y."/>
            <person name="Kim D."/>
            <person name="Lee H.H."/>
            <person name="Park K.H."/>
            <person name="Park S.-H."/>
            <person name="Park H.-S."/>
            <person name="Lee H.K."/>
            <person name="Oh T.K."/>
            <person name="Kim J.F."/>
        </authorList>
    </citation>
    <scope>NUCLEOTIDE SEQUENCE [LARGE SCALE GENOMIC DNA]</scope>
    <source>
        <strain>KCTC 2396</strain>
    </source>
</reference>
<organism>
    <name type="scientific">Hahella chejuensis (strain KCTC 2396)</name>
    <dbReference type="NCBI Taxonomy" id="349521"/>
    <lineage>
        <taxon>Bacteria</taxon>
        <taxon>Pseudomonadati</taxon>
        <taxon>Pseudomonadota</taxon>
        <taxon>Gammaproteobacteria</taxon>
        <taxon>Oceanospirillales</taxon>
        <taxon>Hahellaceae</taxon>
        <taxon>Hahella</taxon>
    </lineage>
</organism>